<accession>P0AB51</accession>
<accession>P31807</accession>
<protein>
    <recommendedName>
        <fullName>Uncharacterized protein YchH</fullName>
    </recommendedName>
</protein>
<name>YCHH_ECO57</name>
<reference key="1">
    <citation type="journal article" date="2001" name="Nature">
        <title>Genome sequence of enterohaemorrhagic Escherichia coli O157:H7.</title>
        <authorList>
            <person name="Perna N.T."/>
            <person name="Plunkett G. III"/>
            <person name="Burland V."/>
            <person name="Mau B."/>
            <person name="Glasner J.D."/>
            <person name="Rose D.J."/>
            <person name="Mayhew G.F."/>
            <person name="Evans P.S."/>
            <person name="Gregor J."/>
            <person name="Kirkpatrick H.A."/>
            <person name="Posfai G."/>
            <person name="Hackett J."/>
            <person name="Klink S."/>
            <person name="Boutin A."/>
            <person name="Shao Y."/>
            <person name="Miller L."/>
            <person name="Grotbeck E.J."/>
            <person name="Davis N.W."/>
            <person name="Lim A."/>
            <person name="Dimalanta E.T."/>
            <person name="Potamousis K."/>
            <person name="Apodaca J."/>
            <person name="Anantharaman T.S."/>
            <person name="Lin J."/>
            <person name="Yen G."/>
            <person name="Schwartz D.C."/>
            <person name="Welch R.A."/>
            <person name="Blattner F.R."/>
        </authorList>
    </citation>
    <scope>NUCLEOTIDE SEQUENCE [LARGE SCALE GENOMIC DNA]</scope>
    <source>
        <strain>O157:H7 / EDL933 / ATCC 700927 / EHEC</strain>
    </source>
</reference>
<reference key="2">
    <citation type="journal article" date="2001" name="DNA Res.">
        <title>Complete genome sequence of enterohemorrhagic Escherichia coli O157:H7 and genomic comparison with a laboratory strain K-12.</title>
        <authorList>
            <person name="Hayashi T."/>
            <person name="Makino K."/>
            <person name="Ohnishi M."/>
            <person name="Kurokawa K."/>
            <person name="Ishii K."/>
            <person name="Yokoyama K."/>
            <person name="Han C.-G."/>
            <person name="Ohtsubo E."/>
            <person name="Nakayama K."/>
            <person name="Murata T."/>
            <person name="Tanaka M."/>
            <person name="Tobe T."/>
            <person name="Iida T."/>
            <person name="Takami H."/>
            <person name="Honda T."/>
            <person name="Sasakawa C."/>
            <person name="Ogasawara N."/>
            <person name="Yasunaga T."/>
            <person name="Kuhara S."/>
            <person name="Shiba T."/>
            <person name="Hattori M."/>
            <person name="Shinagawa H."/>
        </authorList>
    </citation>
    <scope>NUCLEOTIDE SEQUENCE [LARGE SCALE GENOMIC DNA]</scope>
    <source>
        <strain>O157:H7 / Sakai / RIMD 0509952 / EHEC</strain>
    </source>
</reference>
<feature type="chain" id="PRO_0000168868" description="Uncharacterized protein YchH">
    <location>
        <begin position="1"/>
        <end position="92"/>
    </location>
</feature>
<organism>
    <name type="scientific">Escherichia coli O157:H7</name>
    <dbReference type="NCBI Taxonomy" id="83334"/>
    <lineage>
        <taxon>Bacteria</taxon>
        <taxon>Pseudomonadati</taxon>
        <taxon>Pseudomonadota</taxon>
        <taxon>Gammaproteobacteria</taxon>
        <taxon>Enterobacterales</taxon>
        <taxon>Enterobacteriaceae</taxon>
        <taxon>Escherichia</taxon>
    </lineage>
</organism>
<keyword id="KW-1185">Reference proteome</keyword>
<gene>
    <name type="primary">ychH</name>
    <name type="ordered locus">Z1976</name>
    <name type="ordered locus">ECs1710</name>
</gene>
<dbReference type="EMBL" id="AE005174">
    <property type="protein sequence ID" value="AAG56063.1"/>
    <property type="molecule type" value="Genomic_DNA"/>
</dbReference>
<dbReference type="EMBL" id="BA000007">
    <property type="protein sequence ID" value="BAB35133.1"/>
    <property type="molecule type" value="Genomic_DNA"/>
</dbReference>
<dbReference type="PIR" id="C85700">
    <property type="entry name" value="C85700"/>
</dbReference>
<dbReference type="PIR" id="F90842">
    <property type="entry name" value="F90842"/>
</dbReference>
<dbReference type="RefSeq" id="NP_309737.1">
    <property type="nucleotide sequence ID" value="NC_002695.1"/>
</dbReference>
<dbReference type="RefSeq" id="WP_000823885.1">
    <property type="nucleotide sequence ID" value="NZ_VOAI01000038.1"/>
</dbReference>
<dbReference type="STRING" id="155864.Z1976"/>
<dbReference type="GeneID" id="913153"/>
<dbReference type="GeneID" id="93775270"/>
<dbReference type="KEGG" id="ece:Z1976"/>
<dbReference type="KEGG" id="ecs:ECs_1710"/>
<dbReference type="PATRIC" id="fig|386585.9.peg.1808"/>
<dbReference type="eggNOG" id="ENOG5032TWR">
    <property type="taxonomic scope" value="Bacteria"/>
</dbReference>
<dbReference type="HOGENOM" id="CLU_187796_0_0_6"/>
<dbReference type="OMA" id="KRCRRDQ"/>
<dbReference type="Proteomes" id="UP000000558">
    <property type="component" value="Chromosome"/>
</dbReference>
<dbReference type="Proteomes" id="UP000002519">
    <property type="component" value="Chromosome"/>
</dbReference>
<dbReference type="InterPro" id="IPR019698">
    <property type="entry name" value="DUF2583"/>
</dbReference>
<dbReference type="NCBIfam" id="NF007968">
    <property type="entry name" value="PRK10692.1"/>
    <property type="match status" value="1"/>
</dbReference>
<dbReference type="Pfam" id="PF10762">
    <property type="entry name" value="DUF2583"/>
    <property type="match status" value="1"/>
</dbReference>
<proteinExistence type="predicted"/>
<sequence>MKRKNASLLGNVLMGLGLVVMVVGVGYSILNQLPQFNMPQYFAHGAVLSIFVGAILWLAGARVGGHEQVCDRYWWVRHYDKRCRRSDNRRHS</sequence>